<keyword id="KW-0004">4Fe-4S</keyword>
<keyword id="KW-0997">Cell inner membrane</keyword>
<keyword id="KW-1003">Cell membrane</keyword>
<keyword id="KW-0249">Electron transport</keyword>
<keyword id="KW-0408">Iron</keyword>
<keyword id="KW-0411">Iron-sulfur</keyword>
<keyword id="KW-0472">Membrane</keyword>
<keyword id="KW-0479">Metal-binding</keyword>
<keyword id="KW-0677">Repeat</keyword>
<keyword id="KW-1278">Translocase</keyword>
<keyword id="KW-0813">Transport</keyword>
<accession>A8A0H1</accession>
<dbReference type="EC" id="7.-.-.-" evidence="1"/>
<dbReference type="EMBL" id="CP000802">
    <property type="protein sequence ID" value="ABV06025.1"/>
    <property type="molecule type" value="Genomic_DNA"/>
</dbReference>
<dbReference type="RefSeq" id="WP_000991805.1">
    <property type="nucleotide sequence ID" value="NC_009800.1"/>
</dbReference>
<dbReference type="KEGG" id="ecx:EcHS_A1704"/>
<dbReference type="HOGENOM" id="CLU_063448_2_0_6"/>
<dbReference type="GO" id="GO:0005886">
    <property type="term" value="C:plasma membrane"/>
    <property type="evidence" value="ECO:0007669"/>
    <property type="project" value="UniProtKB-SubCell"/>
</dbReference>
<dbReference type="GO" id="GO:0051539">
    <property type="term" value="F:4 iron, 4 sulfur cluster binding"/>
    <property type="evidence" value="ECO:0007669"/>
    <property type="project" value="UniProtKB-UniRule"/>
</dbReference>
<dbReference type="GO" id="GO:0009055">
    <property type="term" value="F:electron transfer activity"/>
    <property type="evidence" value="ECO:0007669"/>
    <property type="project" value="InterPro"/>
</dbReference>
<dbReference type="GO" id="GO:0046872">
    <property type="term" value="F:metal ion binding"/>
    <property type="evidence" value="ECO:0007669"/>
    <property type="project" value="UniProtKB-KW"/>
</dbReference>
<dbReference type="GO" id="GO:0022900">
    <property type="term" value="P:electron transport chain"/>
    <property type="evidence" value="ECO:0007669"/>
    <property type="project" value="UniProtKB-UniRule"/>
</dbReference>
<dbReference type="FunFam" id="1.10.15.40:FF:000001">
    <property type="entry name" value="Ion-translocating oxidoreductase complex subunit B"/>
    <property type="match status" value="1"/>
</dbReference>
<dbReference type="Gene3D" id="3.30.70.20">
    <property type="match status" value="1"/>
</dbReference>
<dbReference type="Gene3D" id="1.10.15.40">
    <property type="entry name" value="Electron transport complex subunit B, putative Fe-S cluster"/>
    <property type="match status" value="1"/>
</dbReference>
<dbReference type="HAMAP" id="MF_00463">
    <property type="entry name" value="RsxB_RnfB"/>
    <property type="match status" value="1"/>
</dbReference>
<dbReference type="InterPro" id="IPR007202">
    <property type="entry name" value="4Fe-4S_dom"/>
</dbReference>
<dbReference type="InterPro" id="IPR017896">
    <property type="entry name" value="4Fe4S_Fe-S-bd"/>
</dbReference>
<dbReference type="InterPro" id="IPR017900">
    <property type="entry name" value="4Fe4S_Fe_S_CS"/>
</dbReference>
<dbReference type="InterPro" id="IPR050395">
    <property type="entry name" value="4Fe4S_Ferredoxin_RnfB"/>
</dbReference>
<dbReference type="InterPro" id="IPR010207">
    <property type="entry name" value="Elect_transpt_cplx_RnfB/RsxB"/>
</dbReference>
<dbReference type="InterPro" id="IPR016463">
    <property type="entry name" value="RnfB/RsxB_Proteobac"/>
</dbReference>
<dbReference type="NCBIfam" id="NF003475">
    <property type="entry name" value="PRK05113.1"/>
    <property type="match status" value="1"/>
</dbReference>
<dbReference type="NCBIfam" id="TIGR01944">
    <property type="entry name" value="rnfB"/>
    <property type="match status" value="1"/>
</dbReference>
<dbReference type="PANTHER" id="PTHR43560">
    <property type="entry name" value="ION-TRANSLOCATING OXIDOREDUCTASE COMPLEX SUBUNIT B"/>
    <property type="match status" value="1"/>
</dbReference>
<dbReference type="PANTHER" id="PTHR43560:SF1">
    <property type="entry name" value="ION-TRANSLOCATING OXIDOREDUCTASE COMPLEX SUBUNIT B"/>
    <property type="match status" value="1"/>
</dbReference>
<dbReference type="Pfam" id="PF14697">
    <property type="entry name" value="Fer4_21"/>
    <property type="match status" value="1"/>
</dbReference>
<dbReference type="Pfam" id="PF04060">
    <property type="entry name" value="FeS"/>
    <property type="match status" value="1"/>
</dbReference>
<dbReference type="PIRSF" id="PIRSF005784">
    <property type="entry name" value="Elect_transpt_RnfB"/>
    <property type="match status" value="1"/>
</dbReference>
<dbReference type="SUPFAM" id="SSF54862">
    <property type="entry name" value="4Fe-4S ferredoxins"/>
    <property type="match status" value="1"/>
</dbReference>
<dbReference type="PROSITE" id="PS51656">
    <property type="entry name" value="4FE4S"/>
    <property type="match status" value="1"/>
</dbReference>
<dbReference type="PROSITE" id="PS00198">
    <property type="entry name" value="4FE4S_FER_1"/>
    <property type="match status" value="2"/>
</dbReference>
<dbReference type="PROSITE" id="PS51379">
    <property type="entry name" value="4FE4S_FER_2"/>
    <property type="match status" value="2"/>
</dbReference>
<proteinExistence type="inferred from homology"/>
<evidence type="ECO:0000255" key="1">
    <source>
        <dbReference type="HAMAP-Rule" id="MF_00463"/>
    </source>
</evidence>
<protein>
    <recommendedName>
        <fullName evidence="1">Ion-translocating oxidoreductase complex subunit B</fullName>
        <ecNumber evidence="1">7.-.-.-</ecNumber>
    </recommendedName>
    <alternativeName>
        <fullName evidence="1">Rsx electron transport complex subunit B</fullName>
    </alternativeName>
</protein>
<gene>
    <name evidence="1" type="primary">rsxB</name>
    <name type="synonym">rnfB</name>
    <name type="ordered locus">EcHS_A1704</name>
</gene>
<reference key="1">
    <citation type="journal article" date="2008" name="J. Bacteriol.">
        <title>The pangenome structure of Escherichia coli: comparative genomic analysis of E. coli commensal and pathogenic isolates.</title>
        <authorList>
            <person name="Rasko D.A."/>
            <person name="Rosovitz M.J."/>
            <person name="Myers G.S.A."/>
            <person name="Mongodin E.F."/>
            <person name="Fricke W.F."/>
            <person name="Gajer P."/>
            <person name="Crabtree J."/>
            <person name="Sebaihia M."/>
            <person name="Thomson N.R."/>
            <person name="Chaudhuri R."/>
            <person name="Henderson I.R."/>
            <person name="Sperandio V."/>
            <person name="Ravel J."/>
        </authorList>
    </citation>
    <scope>NUCLEOTIDE SEQUENCE [LARGE SCALE GENOMIC DNA]</scope>
    <source>
        <strain>HS</strain>
    </source>
</reference>
<organism>
    <name type="scientific">Escherichia coli O9:H4 (strain HS)</name>
    <dbReference type="NCBI Taxonomy" id="331112"/>
    <lineage>
        <taxon>Bacteria</taxon>
        <taxon>Pseudomonadati</taxon>
        <taxon>Pseudomonadota</taxon>
        <taxon>Gammaproteobacteria</taxon>
        <taxon>Enterobacterales</taxon>
        <taxon>Enterobacteriaceae</taxon>
        <taxon>Escherichia</taxon>
    </lineage>
</organism>
<name>RSXB_ECOHS</name>
<comment type="function">
    <text evidence="1">Part of a membrane-bound complex that couples electron transfer with translocation of ions across the membrane. Required to maintain the reduced state of SoxR.</text>
</comment>
<comment type="cofactor">
    <cofactor evidence="1">
        <name>[4Fe-4S] cluster</name>
        <dbReference type="ChEBI" id="CHEBI:49883"/>
    </cofactor>
    <text evidence="1">Binds 3 [4Fe-4S] clusters.</text>
</comment>
<comment type="subunit">
    <text evidence="1">The complex is composed of six subunits: RsxA, RsxB, RsxC, RsxD, RsxE and RsxG.</text>
</comment>
<comment type="subcellular location">
    <subcellularLocation>
        <location evidence="1">Cell inner membrane</location>
    </subcellularLocation>
</comment>
<comment type="similarity">
    <text evidence="1">Belongs to the 4Fe4S bacterial-type ferredoxin family. RnfB subfamily.</text>
</comment>
<sequence length="192" mass="20544">MNAIWIAVAAVSLLGLAFGAILGYASRRFAVEDDPVVEKIDEILPQSQCGQCGYPGCRPYAEAISCNGEKINRCAPGGEAVMLKIAELLNVEPQPLDGEAQEITPARMVAVIDENNCIGCTKCIQACPVDAIVGATRAMHTVMSDLCTGCNLCVDPCPTHCISLQPVAETPDSWKWDLNTIPVRIIPVEHHA</sequence>
<feature type="chain" id="PRO_1000060347" description="Ion-translocating oxidoreductase complex subunit B">
    <location>
        <begin position="1"/>
        <end position="192"/>
    </location>
</feature>
<feature type="domain" description="4Fe-4S" evidence="1">
    <location>
        <begin position="32"/>
        <end position="91"/>
    </location>
</feature>
<feature type="domain" description="4Fe-4S ferredoxin-type 1" evidence="1">
    <location>
        <begin position="108"/>
        <end position="137"/>
    </location>
</feature>
<feature type="domain" description="4Fe-4S ferredoxin-type 2" evidence="1">
    <location>
        <begin position="138"/>
        <end position="167"/>
    </location>
</feature>
<feature type="region of interest" description="Hydrophobic" evidence="1">
    <location>
        <begin position="1"/>
        <end position="26"/>
    </location>
</feature>
<feature type="binding site" evidence="1">
    <location>
        <position position="49"/>
    </location>
    <ligand>
        <name>[4Fe-4S] cluster</name>
        <dbReference type="ChEBI" id="CHEBI:49883"/>
        <label>1</label>
    </ligand>
</feature>
<feature type="binding site" evidence="1">
    <location>
        <position position="52"/>
    </location>
    <ligand>
        <name>[4Fe-4S] cluster</name>
        <dbReference type="ChEBI" id="CHEBI:49883"/>
        <label>1</label>
    </ligand>
</feature>
<feature type="binding site" evidence="1">
    <location>
        <position position="57"/>
    </location>
    <ligand>
        <name>[4Fe-4S] cluster</name>
        <dbReference type="ChEBI" id="CHEBI:49883"/>
        <label>1</label>
    </ligand>
</feature>
<feature type="binding site" evidence="1">
    <location>
        <position position="74"/>
    </location>
    <ligand>
        <name>[4Fe-4S] cluster</name>
        <dbReference type="ChEBI" id="CHEBI:49883"/>
        <label>1</label>
    </ligand>
</feature>
<feature type="binding site" evidence="1">
    <location>
        <position position="117"/>
    </location>
    <ligand>
        <name>[4Fe-4S] cluster</name>
        <dbReference type="ChEBI" id="CHEBI:49883"/>
        <label>2</label>
    </ligand>
</feature>
<feature type="binding site" evidence="1">
    <location>
        <position position="120"/>
    </location>
    <ligand>
        <name>[4Fe-4S] cluster</name>
        <dbReference type="ChEBI" id="CHEBI:49883"/>
        <label>2</label>
    </ligand>
</feature>
<feature type="binding site" evidence="1">
    <location>
        <position position="123"/>
    </location>
    <ligand>
        <name>[4Fe-4S] cluster</name>
        <dbReference type="ChEBI" id="CHEBI:49883"/>
        <label>2</label>
    </ligand>
</feature>
<feature type="binding site" evidence="1">
    <location>
        <position position="127"/>
    </location>
    <ligand>
        <name>[4Fe-4S] cluster</name>
        <dbReference type="ChEBI" id="CHEBI:49883"/>
        <label>3</label>
    </ligand>
</feature>
<feature type="binding site" evidence="1">
    <location>
        <position position="147"/>
    </location>
    <ligand>
        <name>[4Fe-4S] cluster</name>
        <dbReference type="ChEBI" id="CHEBI:49883"/>
        <label>3</label>
    </ligand>
</feature>
<feature type="binding site" evidence="1">
    <location>
        <position position="150"/>
    </location>
    <ligand>
        <name>[4Fe-4S] cluster</name>
        <dbReference type="ChEBI" id="CHEBI:49883"/>
        <label>3</label>
    </ligand>
</feature>
<feature type="binding site" evidence="1">
    <location>
        <position position="153"/>
    </location>
    <ligand>
        <name>[4Fe-4S] cluster</name>
        <dbReference type="ChEBI" id="CHEBI:49883"/>
        <label>3</label>
    </ligand>
</feature>
<feature type="binding site" evidence="1">
    <location>
        <position position="157"/>
    </location>
    <ligand>
        <name>[4Fe-4S] cluster</name>
        <dbReference type="ChEBI" id="CHEBI:49883"/>
        <label>2</label>
    </ligand>
</feature>